<name>KHSE_PYRIL</name>
<dbReference type="EC" id="2.7.1.39" evidence="1"/>
<dbReference type="EMBL" id="CP000504">
    <property type="protein sequence ID" value="ABL87238.1"/>
    <property type="molecule type" value="Genomic_DNA"/>
</dbReference>
<dbReference type="RefSeq" id="WP_011761815.1">
    <property type="nucleotide sequence ID" value="NC_008701.1"/>
</dbReference>
<dbReference type="SMR" id="A1RQK6"/>
<dbReference type="STRING" id="384616.Pisl_0054"/>
<dbReference type="GeneID" id="4616739"/>
<dbReference type="KEGG" id="pis:Pisl_0054"/>
<dbReference type="eggNOG" id="arCOG01027">
    <property type="taxonomic scope" value="Archaea"/>
</dbReference>
<dbReference type="HOGENOM" id="CLU_041243_1_1_2"/>
<dbReference type="OrthoDB" id="28273at2157"/>
<dbReference type="UniPathway" id="UPA00050">
    <property type="reaction ID" value="UER00064"/>
</dbReference>
<dbReference type="Proteomes" id="UP000002595">
    <property type="component" value="Chromosome"/>
</dbReference>
<dbReference type="GO" id="GO:0005737">
    <property type="term" value="C:cytoplasm"/>
    <property type="evidence" value="ECO:0007669"/>
    <property type="project" value="UniProtKB-SubCell"/>
</dbReference>
<dbReference type="GO" id="GO:0005524">
    <property type="term" value="F:ATP binding"/>
    <property type="evidence" value="ECO:0007669"/>
    <property type="project" value="UniProtKB-UniRule"/>
</dbReference>
<dbReference type="GO" id="GO:0004413">
    <property type="term" value="F:homoserine kinase activity"/>
    <property type="evidence" value="ECO:0007669"/>
    <property type="project" value="UniProtKB-UniRule"/>
</dbReference>
<dbReference type="GO" id="GO:0009088">
    <property type="term" value="P:threonine biosynthetic process"/>
    <property type="evidence" value="ECO:0007669"/>
    <property type="project" value="UniProtKB-UniRule"/>
</dbReference>
<dbReference type="Gene3D" id="3.30.230.10">
    <property type="match status" value="1"/>
</dbReference>
<dbReference type="Gene3D" id="3.30.70.890">
    <property type="entry name" value="GHMP kinase, C-terminal domain"/>
    <property type="match status" value="1"/>
</dbReference>
<dbReference type="HAMAP" id="MF_00384">
    <property type="entry name" value="Homoser_kinase"/>
    <property type="match status" value="1"/>
</dbReference>
<dbReference type="InterPro" id="IPR013750">
    <property type="entry name" value="GHMP_kinase_C_dom"/>
</dbReference>
<dbReference type="InterPro" id="IPR036554">
    <property type="entry name" value="GHMP_kinase_C_sf"/>
</dbReference>
<dbReference type="InterPro" id="IPR006204">
    <property type="entry name" value="GHMP_kinase_N_dom"/>
</dbReference>
<dbReference type="InterPro" id="IPR006203">
    <property type="entry name" value="GHMP_knse_ATP-bd_CS"/>
</dbReference>
<dbReference type="InterPro" id="IPR000870">
    <property type="entry name" value="Homoserine_kinase"/>
</dbReference>
<dbReference type="InterPro" id="IPR020568">
    <property type="entry name" value="Ribosomal_Su5_D2-typ_SF"/>
</dbReference>
<dbReference type="InterPro" id="IPR014721">
    <property type="entry name" value="Ribsml_uS5_D2-typ_fold_subgr"/>
</dbReference>
<dbReference type="NCBIfam" id="NF002288">
    <property type="entry name" value="PRK01212.1-4"/>
    <property type="match status" value="1"/>
</dbReference>
<dbReference type="PANTHER" id="PTHR20861:SF1">
    <property type="entry name" value="HOMOSERINE KINASE"/>
    <property type="match status" value="1"/>
</dbReference>
<dbReference type="PANTHER" id="PTHR20861">
    <property type="entry name" value="HOMOSERINE/4-DIPHOSPHOCYTIDYL-2-C-METHYL-D-ERYTHRITOL KINASE"/>
    <property type="match status" value="1"/>
</dbReference>
<dbReference type="Pfam" id="PF08544">
    <property type="entry name" value="GHMP_kinases_C"/>
    <property type="match status" value="1"/>
</dbReference>
<dbReference type="Pfam" id="PF00288">
    <property type="entry name" value="GHMP_kinases_N"/>
    <property type="match status" value="1"/>
</dbReference>
<dbReference type="PIRSF" id="PIRSF000676">
    <property type="entry name" value="Homoser_kin"/>
    <property type="match status" value="1"/>
</dbReference>
<dbReference type="PRINTS" id="PR00958">
    <property type="entry name" value="HOMSERKINASE"/>
</dbReference>
<dbReference type="SUPFAM" id="SSF55060">
    <property type="entry name" value="GHMP Kinase, C-terminal domain"/>
    <property type="match status" value="1"/>
</dbReference>
<dbReference type="SUPFAM" id="SSF54211">
    <property type="entry name" value="Ribosomal protein S5 domain 2-like"/>
    <property type="match status" value="1"/>
</dbReference>
<dbReference type="PROSITE" id="PS00627">
    <property type="entry name" value="GHMP_KINASES_ATP"/>
    <property type="match status" value="1"/>
</dbReference>
<proteinExistence type="inferred from homology"/>
<sequence length="298" mass="31055">MRAPSTSANLGSGFDVVAVAHDAYFAEAYIKLTSGCGVDIKFRGFNPGSDNTVKRAFQHLFERLGRCWGVEAEVVNNIPIARGLGSSGASAVAALAAFIREAGLRVEPAVVVEAAGLGEVAAAGSPHFDNVAAAALGGAVVIASVKPLELVKFMPKLIFVIGVPDVPPMPEKTKVMRSVLPREVSFRTYVAQLARVSALVAGFAKSDPRLVALGMSDEVVEPARAPYVPAYGRVKRYALEAGALAVSISGAGPSIIALVEEKNSDVVKAAVERAYIEEGLRAEVKVASITEGALAQNI</sequence>
<reference key="1">
    <citation type="submission" date="2006-12" db="EMBL/GenBank/DDBJ databases">
        <title>Complete sequence of Pyrobaculum islandicum DSM 4184.</title>
        <authorList>
            <person name="Copeland A."/>
            <person name="Lucas S."/>
            <person name="Lapidus A."/>
            <person name="Barry K."/>
            <person name="Detter J.C."/>
            <person name="Glavina del Rio T."/>
            <person name="Dalin E."/>
            <person name="Tice H."/>
            <person name="Pitluck S."/>
            <person name="Meincke L."/>
            <person name="Brettin T."/>
            <person name="Bruce D."/>
            <person name="Han C."/>
            <person name="Tapia R."/>
            <person name="Gilna P."/>
            <person name="Schmutz J."/>
            <person name="Larimer F."/>
            <person name="Land M."/>
            <person name="Hauser L."/>
            <person name="Kyrpides N."/>
            <person name="Mikhailova N."/>
            <person name="Cozen A.E."/>
            <person name="Fitz-Gibbon S.T."/>
            <person name="House C.H."/>
            <person name="Saltikov C."/>
            <person name="Lowe T."/>
            <person name="Richardson P."/>
        </authorList>
    </citation>
    <scope>NUCLEOTIDE SEQUENCE [LARGE SCALE GENOMIC DNA]</scope>
    <source>
        <strain>DSM 4184 / JCM 9189 / GEO3</strain>
    </source>
</reference>
<accession>A1RQK6</accession>
<evidence type="ECO:0000255" key="1">
    <source>
        <dbReference type="HAMAP-Rule" id="MF_00384"/>
    </source>
</evidence>
<comment type="function">
    <text evidence="1">Catalyzes the ATP-dependent phosphorylation of L-homoserine to L-homoserine phosphate.</text>
</comment>
<comment type="catalytic activity">
    <reaction evidence="1">
        <text>L-homoserine + ATP = O-phospho-L-homoserine + ADP + H(+)</text>
        <dbReference type="Rhea" id="RHEA:13985"/>
        <dbReference type="ChEBI" id="CHEBI:15378"/>
        <dbReference type="ChEBI" id="CHEBI:30616"/>
        <dbReference type="ChEBI" id="CHEBI:57476"/>
        <dbReference type="ChEBI" id="CHEBI:57590"/>
        <dbReference type="ChEBI" id="CHEBI:456216"/>
        <dbReference type="EC" id="2.7.1.39"/>
    </reaction>
</comment>
<comment type="pathway">
    <text evidence="1">Amino-acid biosynthesis; L-threonine biosynthesis; L-threonine from L-aspartate: step 4/5.</text>
</comment>
<comment type="subcellular location">
    <subcellularLocation>
        <location evidence="1">Cytoplasm</location>
    </subcellularLocation>
</comment>
<comment type="similarity">
    <text evidence="1">Belongs to the GHMP kinase family. Homoserine kinase subfamily.</text>
</comment>
<feature type="chain" id="PRO_1000122435" description="Homoserine kinase">
    <location>
        <begin position="1"/>
        <end position="298"/>
    </location>
</feature>
<feature type="binding site" evidence="1">
    <location>
        <begin position="79"/>
        <end position="89"/>
    </location>
    <ligand>
        <name>ATP</name>
        <dbReference type="ChEBI" id="CHEBI:30616"/>
    </ligand>
</feature>
<keyword id="KW-0028">Amino-acid biosynthesis</keyword>
<keyword id="KW-0067">ATP-binding</keyword>
<keyword id="KW-0963">Cytoplasm</keyword>
<keyword id="KW-0418">Kinase</keyword>
<keyword id="KW-0547">Nucleotide-binding</keyword>
<keyword id="KW-0791">Threonine biosynthesis</keyword>
<keyword id="KW-0808">Transferase</keyword>
<organism>
    <name type="scientific">Pyrobaculum islandicum (strain DSM 4184 / JCM 9189 / GEO3)</name>
    <dbReference type="NCBI Taxonomy" id="384616"/>
    <lineage>
        <taxon>Archaea</taxon>
        <taxon>Thermoproteota</taxon>
        <taxon>Thermoprotei</taxon>
        <taxon>Thermoproteales</taxon>
        <taxon>Thermoproteaceae</taxon>
        <taxon>Pyrobaculum</taxon>
    </lineage>
</organism>
<protein>
    <recommendedName>
        <fullName evidence="1">Homoserine kinase</fullName>
        <shortName evidence="1">HK</shortName>
        <shortName evidence="1">HSK</shortName>
        <ecNumber evidence="1">2.7.1.39</ecNumber>
    </recommendedName>
</protein>
<gene>
    <name evidence="1" type="primary">thrB</name>
    <name type="ordered locus">Pisl_0054</name>
</gene>